<gene>
    <name type="primary">Rras</name>
</gene>
<keyword id="KW-1003">Cell membrane</keyword>
<keyword id="KW-0342">GTP-binding</keyword>
<keyword id="KW-0378">Hydrolase</keyword>
<keyword id="KW-0449">Lipoprotein</keyword>
<keyword id="KW-0472">Membrane</keyword>
<keyword id="KW-0488">Methylation</keyword>
<keyword id="KW-0547">Nucleotide-binding</keyword>
<keyword id="KW-0564">Palmitate</keyword>
<keyword id="KW-0636">Prenylation</keyword>
<keyword id="KW-1185">Reference proteome</keyword>
<sequence length="218" mass="23909">MSSGAASGTGRGRPRGGGPGPRDPPPGETHKLVVVGGGGVGKSALTIQFIQSYFVSDYDPTIEDSYTKICTVDGIPARLDILDTAGQEEFGAMREQYMRAGNGFLLVFAINDRQSFIEVSKLFTQILRVKDRDDFPIVLVGNKADLETQRQVLRSEASSFSASHHMTYFEASAKLRLNVDEAFEQLVRTVRKYQEQELPPSPPSAPRKKDGRCPCVLL</sequence>
<organism>
    <name type="scientific">Rattus norvegicus</name>
    <name type="common">Rat</name>
    <dbReference type="NCBI Taxonomy" id="10116"/>
    <lineage>
        <taxon>Eukaryota</taxon>
        <taxon>Metazoa</taxon>
        <taxon>Chordata</taxon>
        <taxon>Craniata</taxon>
        <taxon>Vertebrata</taxon>
        <taxon>Euteleostomi</taxon>
        <taxon>Mammalia</taxon>
        <taxon>Eutheria</taxon>
        <taxon>Euarchontoglires</taxon>
        <taxon>Glires</taxon>
        <taxon>Rodentia</taxon>
        <taxon>Myomorpha</taxon>
        <taxon>Muroidea</taxon>
        <taxon>Muridae</taxon>
        <taxon>Murinae</taxon>
        <taxon>Rattus</taxon>
    </lineage>
</organism>
<name>RRAS_RAT</name>
<feature type="chain" id="PRO_0000408475" description="Ras-related protein R-Ras">
    <location>
        <begin position="1"/>
        <end position="215"/>
    </location>
</feature>
<feature type="propeptide" id="PRO_0000408476" description="Removed in mature form" evidence="1">
    <location>
        <begin position="216"/>
        <end position="218"/>
    </location>
</feature>
<feature type="region of interest" description="Disordered" evidence="4">
    <location>
        <begin position="1"/>
        <end position="30"/>
    </location>
</feature>
<feature type="short sequence motif" description="Effector region">
    <location>
        <begin position="58"/>
        <end position="66"/>
    </location>
</feature>
<feature type="compositionally biased region" description="Gly residues" evidence="4">
    <location>
        <begin position="7"/>
        <end position="20"/>
    </location>
</feature>
<feature type="binding site" evidence="2">
    <location>
        <begin position="36"/>
        <end position="44"/>
    </location>
    <ligand>
        <name>GTP</name>
        <dbReference type="ChEBI" id="CHEBI:37565"/>
    </ligand>
</feature>
<feature type="binding site" evidence="1">
    <location>
        <begin position="83"/>
        <end position="87"/>
    </location>
    <ligand>
        <name>GTP</name>
        <dbReference type="ChEBI" id="CHEBI:37565"/>
    </ligand>
</feature>
<feature type="binding site" evidence="2">
    <location>
        <begin position="142"/>
        <end position="145"/>
    </location>
    <ligand>
        <name>GTP</name>
        <dbReference type="ChEBI" id="CHEBI:37565"/>
    </ligand>
</feature>
<feature type="binding site" evidence="2">
    <location>
        <begin position="172"/>
        <end position="174"/>
    </location>
    <ligand>
        <name>GTP</name>
        <dbReference type="ChEBI" id="CHEBI:37565"/>
    </ligand>
</feature>
<feature type="modified residue" description="Cysteine methyl ester" evidence="1">
    <location>
        <position position="215"/>
    </location>
</feature>
<feature type="lipid moiety-binding region" description="S-geranylgeranyl cysteine" evidence="1">
    <location>
        <position position="215"/>
    </location>
</feature>
<feature type="sequence conflict" description="In Ref. 1; FQ211166." evidence="6" ref="1">
    <original>N</original>
    <variation>S</variation>
    <location>
        <position position="142"/>
    </location>
</feature>
<comment type="function">
    <text evidence="2">GTP-binding protein with GTPase activity, likely involved in the regulation of MAPK signaling pathway and thereby controlling multiple cellular processes (By similarity). Regulates the organization of the actin cytoskeleton (By similarity). With OSPBL3, modulates integrin beta-1 (ITGB1) activity (By similarity).</text>
</comment>
<comment type="catalytic activity">
    <reaction evidence="2">
        <text>GTP + H2O = GDP + phosphate + H(+)</text>
        <dbReference type="Rhea" id="RHEA:19669"/>
        <dbReference type="ChEBI" id="CHEBI:15377"/>
        <dbReference type="ChEBI" id="CHEBI:15378"/>
        <dbReference type="ChEBI" id="CHEBI:37565"/>
        <dbReference type="ChEBI" id="CHEBI:43474"/>
        <dbReference type="ChEBI" id="CHEBI:58189"/>
        <dbReference type="EC" id="3.6.5.2"/>
    </reaction>
    <physiologicalReaction direction="left-to-right" evidence="3">
        <dbReference type="Rhea" id="RHEA:19670"/>
    </physiologicalReaction>
</comment>
<comment type="subunit">
    <text evidence="2 5">Interacts with PLCE1 (By similarity). Interacts (active GTP-bound form preferentially) with RGS14 (PubMed:19319189). Interacts with OSBPL3 (By similarity). Interacts with ZDHHC19 (By similarity).</text>
</comment>
<comment type="subcellular location">
    <subcellularLocation>
        <location evidence="1">Cell membrane</location>
        <topology evidence="1">Lipid-anchor</topology>
        <orientation evidence="1">Cytoplasmic side</orientation>
    </subcellularLocation>
    <text evidence="1">Inner surface of plasma membrane possibly with attachment requiring acylation of the C-terminal cysteine.</text>
</comment>
<comment type="PTM">
    <text evidence="2">S-palmitoylated by ZDHHC19, leading to increased association with membranes and with rafts/caveolae as well as enhanced cell viability.</text>
</comment>
<comment type="similarity">
    <text evidence="6">Belongs to the small GTPase superfamily. Ras family.</text>
</comment>
<proteinExistence type="evidence at protein level"/>
<dbReference type="EC" id="3.6.5.2" evidence="2"/>
<dbReference type="EMBL" id="FQ211166">
    <property type="status" value="NOT_ANNOTATED_CDS"/>
    <property type="molecule type" value="mRNA"/>
</dbReference>
<dbReference type="EMBL" id="CH473979">
    <property type="protein sequence ID" value="EDM07427.1"/>
    <property type="molecule type" value="Genomic_DNA"/>
</dbReference>
<dbReference type="RefSeq" id="NP_001101951.1">
    <property type="nucleotide sequence ID" value="NM_001108481.1"/>
</dbReference>
<dbReference type="SMR" id="D3Z8L7"/>
<dbReference type="CORUM" id="D3Z8L7"/>
<dbReference type="FunCoup" id="D3Z8L7">
    <property type="interactions" value="1166"/>
</dbReference>
<dbReference type="STRING" id="10116.ENSRNOP00000027809"/>
<dbReference type="PhosphoSitePlus" id="D3Z8L7"/>
<dbReference type="SwissPalm" id="D3Z8L7"/>
<dbReference type="jPOST" id="D3Z8L7"/>
<dbReference type="PaxDb" id="10116-ENSRNOP00000027809"/>
<dbReference type="PeptideAtlas" id="D3Z8L7"/>
<dbReference type="Ensembl" id="ENSRNOT00000027809.8">
    <property type="protein sequence ID" value="ENSRNOP00000027809.4"/>
    <property type="gene ID" value="ENSRNOG00000037247.5"/>
</dbReference>
<dbReference type="GeneID" id="361568"/>
<dbReference type="KEGG" id="rno:361568"/>
<dbReference type="UCSC" id="RGD:1311443">
    <property type="organism name" value="rat"/>
</dbReference>
<dbReference type="AGR" id="RGD:1311443"/>
<dbReference type="CTD" id="6237"/>
<dbReference type="RGD" id="1311443">
    <property type="gene designation" value="Rras"/>
</dbReference>
<dbReference type="eggNOG" id="KOG0395">
    <property type="taxonomic scope" value="Eukaryota"/>
</dbReference>
<dbReference type="GeneTree" id="ENSGT00940000160972"/>
<dbReference type="HOGENOM" id="CLU_041217_9_8_1"/>
<dbReference type="InParanoid" id="D3Z8L7"/>
<dbReference type="OMA" id="GCPCILL"/>
<dbReference type="OrthoDB" id="5976022at2759"/>
<dbReference type="PhylomeDB" id="D3Z8L7"/>
<dbReference type="TreeFam" id="TF312796"/>
<dbReference type="Reactome" id="R-RNO-416550">
    <property type="pathway name" value="Sema4D mediated inhibition of cell attachment and migration"/>
</dbReference>
<dbReference type="PRO" id="PR:D3Z8L7"/>
<dbReference type="Proteomes" id="UP000002494">
    <property type="component" value="Chromosome 1"/>
</dbReference>
<dbReference type="Proteomes" id="UP000234681">
    <property type="component" value="Chromosome 1"/>
</dbReference>
<dbReference type="Bgee" id="ENSRNOG00000037247">
    <property type="expression patterns" value="Expressed in lung and 19 other cell types or tissues"/>
</dbReference>
<dbReference type="GO" id="GO:0005886">
    <property type="term" value="C:plasma membrane"/>
    <property type="evidence" value="ECO:0000318"/>
    <property type="project" value="GO_Central"/>
</dbReference>
<dbReference type="GO" id="GO:0019003">
    <property type="term" value="F:GDP binding"/>
    <property type="evidence" value="ECO:0000266"/>
    <property type="project" value="RGD"/>
</dbReference>
<dbReference type="GO" id="GO:0005525">
    <property type="term" value="F:GTP binding"/>
    <property type="evidence" value="ECO:0000318"/>
    <property type="project" value="GO_Central"/>
</dbReference>
<dbReference type="GO" id="GO:0003924">
    <property type="term" value="F:GTPase activity"/>
    <property type="evidence" value="ECO:0000266"/>
    <property type="project" value="RGD"/>
</dbReference>
<dbReference type="GO" id="GO:0044877">
    <property type="term" value="F:protein-containing complex binding"/>
    <property type="evidence" value="ECO:0000266"/>
    <property type="project" value="RGD"/>
</dbReference>
<dbReference type="GO" id="GO:0016477">
    <property type="term" value="P:cell migration"/>
    <property type="evidence" value="ECO:0000266"/>
    <property type="project" value="RGD"/>
</dbReference>
<dbReference type="GO" id="GO:0060325">
    <property type="term" value="P:face morphogenesis"/>
    <property type="evidence" value="ECO:0000266"/>
    <property type="project" value="RGD"/>
</dbReference>
<dbReference type="GO" id="GO:0002521">
    <property type="term" value="P:leukocyte differentiation"/>
    <property type="evidence" value="ECO:0000266"/>
    <property type="project" value="RGD"/>
</dbReference>
<dbReference type="GO" id="GO:1900148">
    <property type="term" value="P:negative regulation of Schwann cell migration"/>
    <property type="evidence" value="ECO:0000266"/>
    <property type="project" value="RGD"/>
</dbReference>
<dbReference type="GO" id="GO:0045766">
    <property type="term" value="P:positive regulation of angiogenesis"/>
    <property type="evidence" value="ECO:0000250"/>
    <property type="project" value="UniProtKB"/>
</dbReference>
<dbReference type="GO" id="GO:0010595">
    <property type="term" value="P:positive regulation of endothelial cell migration"/>
    <property type="evidence" value="ECO:0000266"/>
    <property type="project" value="RGD"/>
</dbReference>
<dbReference type="GO" id="GO:1904906">
    <property type="term" value="P:positive regulation of endothelial cell-matrix adhesion via fibronectin"/>
    <property type="evidence" value="ECO:0000266"/>
    <property type="project" value="RGD"/>
</dbReference>
<dbReference type="GO" id="GO:2001214">
    <property type="term" value="P:positive regulation of vasculogenesis"/>
    <property type="evidence" value="ECO:0000266"/>
    <property type="project" value="RGD"/>
</dbReference>
<dbReference type="GO" id="GO:0070372">
    <property type="term" value="P:regulation of ERK1 and ERK2 cascade"/>
    <property type="evidence" value="ECO:0000266"/>
    <property type="project" value="RGD"/>
</dbReference>
<dbReference type="GO" id="GO:0051896">
    <property type="term" value="P:regulation of phosphatidylinositol 3-kinase/protein kinase B signal transduction"/>
    <property type="evidence" value="ECO:0000266"/>
    <property type="project" value="RGD"/>
</dbReference>
<dbReference type="GO" id="GO:0036135">
    <property type="term" value="P:Schwann cell migration"/>
    <property type="evidence" value="ECO:0000266"/>
    <property type="project" value="RGD"/>
</dbReference>
<dbReference type="GO" id="GO:0007165">
    <property type="term" value="P:signal transduction"/>
    <property type="evidence" value="ECO:0007669"/>
    <property type="project" value="InterPro"/>
</dbReference>
<dbReference type="FunFam" id="3.40.50.300:FF:000080">
    <property type="entry name" value="Ras-like GTPase Ras1"/>
    <property type="match status" value="1"/>
</dbReference>
<dbReference type="Gene3D" id="3.40.50.300">
    <property type="entry name" value="P-loop containing nucleotide triphosphate hydrolases"/>
    <property type="match status" value="1"/>
</dbReference>
<dbReference type="InterPro" id="IPR027417">
    <property type="entry name" value="P-loop_NTPase"/>
</dbReference>
<dbReference type="InterPro" id="IPR005225">
    <property type="entry name" value="Small_GTP-bd"/>
</dbReference>
<dbReference type="InterPro" id="IPR001806">
    <property type="entry name" value="Small_GTPase"/>
</dbReference>
<dbReference type="InterPro" id="IPR020849">
    <property type="entry name" value="Small_GTPase_Ras-type"/>
</dbReference>
<dbReference type="NCBIfam" id="TIGR00231">
    <property type="entry name" value="small_GTP"/>
    <property type="match status" value="1"/>
</dbReference>
<dbReference type="PANTHER" id="PTHR24070">
    <property type="entry name" value="RAS, DI-RAS, AND RHEB FAMILY MEMBERS OF SMALL GTPASE SUPERFAMILY"/>
    <property type="match status" value="1"/>
</dbReference>
<dbReference type="Pfam" id="PF00071">
    <property type="entry name" value="Ras"/>
    <property type="match status" value="1"/>
</dbReference>
<dbReference type="PRINTS" id="PR00449">
    <property type="entry name" value="RASTRNSFRMNG"/>
</dbReference>
<dbReference type="SMART" id="SM00175">
    <property type="entry name" value="RAB"/>
    <property type="match status" value="1"/>
</dbReference>
<dbReference type="SMART" id="SM00176">
    <property type="entry name" value="RAN"/>
    <property type="match status" value="1"/>
</dbReference>
<dbReference type="SMART" id="SM00173">
    <property type="entry name" value="RAS"/>
    <property type="match status" value="1"/>
</dbReference>
<dbReference type="SMART" id="SM00174">
    <property type="entry name" value="RHO"/>
    <property type="match status" value="1"/>
</dbReference>
<dbReference type="SUPFAM" id="SSF52540">
    <property type="entry name" value="P-loop containing nucleoside triphosphate hydrolases"/>
    <property type="match status" value="1"/>
</dbReference>
<dbReference type="PROSITE" id="PS51421">
    <property type="entry name" value="RAS"/>
    <property type="match status" value="1"/>
</dbReference>
<accession>D3Z8L7</accession>
<evidence type="ECO:0000250" key="1"/>
<evidence type="ECO:0000250" key="2">
    <source>
        <dbReference type="UniProtKB" id="P10301"/>
    </source>
</evidence>
<evidence type="ECO:0000250" key="3">
    <source>
        <dbReference type="UniProtKB" id="P62070"/>
    </source>
</evidence>
<evidence type="ECO:0000256" key="4">
    <source>
        <dbReference type="SAM" id="MobiDB-lite"/>
    </source>
</evidence>
<evidence type="ECO:0000269" key="5">
    <source>
    </source>
</evidence>
<evidence type="ECO:0000305" key="6"/>
<reference key="1">
    <citation type="submission" date="2010-06" db="EMBL/GenBank/DDBJ databases">
        <authorList>
            <consortium name="Genoscope - CEA"/>
        </authorList>
    </citation>
    <scope>NUCLEOTIDE SEQUENCE [LARGE SCALE MRNA]</scope>
</reference>
<reference key="2">
    <citation type="submission" date="2005-09" db="EMBL/GenBank/DDBJ databases">
        <authorList>
            <person name="Mural R.J."/>
            <person name="Adams M.D."/>
            <person name="Myers E.W."/>
            <person name="Smith H.O."/>
            <person name="Venter J.C."/>
        </authorList>
    </citation>
    <scope>NUCLEOTIDE SEQUENCE [LARGE SCALE GENOMIC DNA]</scope>
    <source>
        <strain>Brown Norway</strain>
    </source>
</reference>
<reference key="3">
    <citation type="journal article" date="2009" name="PLoS ONE">
        <title>Regulator of G-protein signaling 14 (RGS14) is a selective H-Ras effector.</title>
        <authorList>
            <person name="Willard F.S."/>
            <person name="Willard M.D."/>
            <person name="Kimple A.J."/>
            <person name="Soundararajan M."/>
            <person name="Oestreich E.A."/>
            <person name="Li X."/>
            <person name="Sowa N.A."/>
            <person name="Kimple R.J."/>
            <person name="Doyle D.A."/>
            <person name="Der C.J."/>
            <person name="Zylka M.J."/>
            <person name="Snider W.D."/>
            <person name="Siderovski D.P."/>
        </authorList>
    </citation>
    <scope>INTERACTION WITH RGS14</scope>
</reference>
<protein>
    <recommendedName>
        <fullName>Ras-related protein R-Ras</fullName>
        <ecNumber evidence="2">3.6.5.2</ecNumber>
    </recommendedName>
    <alternativeName>
        <fullName>p23</fullName>
    </alternativeName>
</protein>